<evidence type="ECO:0000250" key="1"/>
<evidence type="ECO:0000255" key="2">
    <source>
        <dbReference type="HAMAP-Rule" id="MF_01300"/>
    </source>
</evidence>
<gene>
    <name evidence="2" type="primary">dctA</name>
    <name type="ordered locus">Z4942</name>
    <name type="ordered locus">ECs4408</name>
</gene>
<feature type="chain" id="PRO_0000202095" description="Aerobic C4-dicarboxylate transport protein">
    <location>
        <begin position="1"/>
        <end position="428"/>
    </location>
</feature>
<feature type="transmembrane region" description="Helical" evidence="2">
    <location>
        <begin position="5"/>
        <end position="27"/>
    </location>
</feature>
<feature type="transmembrane region" description="Helical" evidence="2">
    <location>
        <begin position="47"/>
        <end position="64"/>
    </location>
</feature>
<feature type="transmembrane region" description="Helical" evidence="2">
    <location>
        <begin position="77"/>
        <end position="99"/>
    </location>
</feature>
<feature type="transmembrane region" description="Helical" evidence="2">
    <location>
        <begin position="141"/>
        <end position="163"/>
    </location>
</feature>
<feature type="transmembrane region" description="Helical" evidence="2">
    <location>
        <begin position="184"/>
        <end position="206"/>
    </location>
</feature>
<feature type="transmembrane region" description="Helical" evidence="2">
    <location>
        <begin position="219"/>
        <end position="241"/>
    </location>
</feature>
<feature type="transmembrane region" description="Helical" evidence="2">
    <location>
        <begin position="326"/>
        <end position="348"/>
    </location>
</feature>
<feature type="transmembrane region" description="Helical" evidence="2">
    <location>
        <begin position="352"/>
        <end position="374"/>
    </location>
</feature>
<proteinExistence type="inferred from homology"/>
<comment type="function">
    <text evidence="1">Responsible for the aerobic transport of the dicarboxylates fumarate and malate and to a lesser extent succinate, from the periplasm across the inner membrane.</text>
</comment>
<comment type="subcellular location">
    <subcellularLocation>
        <location evidence="2">Cell inner membrane</location>
        <topology evidence="2">Multi-pass membrane protein</topology>
    </subcellularLocation>
</comment>
<comment type="similarity">
    <text evidence="2">Belongs to the dicarboxylate/amino acid:cation symporter (DAACS) (TC 2.A.23) family.</text>
</comment>
<accession>Q8X5M2</accession>
<protein>
    <recommendedName>
        <fullName>Aerobic C4-dicarboxylate transport protein</fullName>
    </recommendedName>
</protein>
<sequence length="428" mass="45408">MKTSLFKSLYFQVLTAIAIGILLGHFYPEIGEQMKPLGDGFVKLIKMIIAPVIFCTVVTGIAGMESMKAVGRTGAVALLYFEIVSTIALIIGLIIVNVVQPGAGMNVDPATLDAKAVAVYADQAKDQGIVAFIMDVIPASVIGAFASGNILQVLLFAVLFGFALHRLGSKGQLIFNVIESFSQVIFGIINMIMRLAPIGAFGAMAFTIGKYGVGTLVQLGQLIICFYITCILFVVLVLGSIAKATGFSIFKFIRYIREELLIVLGTSSSESALPRMLDKMEKLGCRKSVVGLVIPTGYSFNLDGTSIYLTMAAVFIAQATNSQMDIVHQITLLIVLLLSSKGAAGVTGSGFIVLAATLSAVGHLPVAGLALILGIDRFMSEARALTNLVGNGVATIVVAKWVKELDHKKLDDALNNRAPDGKTHELSS</sequence>
<organism>
    <name type="scientific">Escherichia coli O157:H7</name>
    <dbReference type="NCBI Taxonomy" id="83334"/>
    <lineage>
        <taxon>Bacteria</taxon>
        <taxon>Pseudomonadati</taxon>
        <taxon>Pseudomonadota</taxon>
        <taxon>Gammaproteobacteria</taxon>
        <taxon>Enterobacterales</taxon>
        <taxon>Enterobacteriaceae</taxon>
        <taxon>Escherichia</taxon>
    </lineage>
</organism>
<keyword id="KW-0997">Cell inner membrane</keyword>
<keyword id="KW-1003">Cell membrane</keyword>
<keyword id="KW-0472">Membrane</keyword>
<keyword id="KW-1185">Reference proteome</keyword>
<keyword id="KW-0769">Symport</keyword>
<keyword id="KW-0812">Transmembrane</keyword>
<keyword id="KW-1133">Transmembrane helix</keyword>
<keyword id="KW-0813">Transport</keyword>
<reference key="1">
    <citation type="journal article" date="2001" name="Nature">
        <title>Genome sequence of enterohaemorrhagic Escherichia coli O157:H7.</title>
        <authorList>
            <person name="Perna N.T."/>
            <person name="Plunkett G. III"/>
            <person name="Burland V."/>
            <person name="Mau B."/>
            <person name="Glasner J.D."/>
            <person name="Rose D.J."/>
            <person name="Mayhew G.F."/>
            <person name="Evans P.S."/>
            <person name="Gregor J."/>
            <person name="Kirkpatrick H.A."/>
            <person name="Posfai G."/>
            <person name="Hackett J."/>
            <person name="Klink S."/>
            <person name="Boutin A."/>
            <person name="Shao Y."/>
            <person name="Miller L."/>
            <person name="Grotbeck E.J."/>
            <person name="Davis N.W."/>
            <person name="Lim A."/>
            <person name="Dimalanta E.T."/>
            <person name="Potamousis K."/>
            <person name="Apodaca J."/>
            <person name="Anantharaman T.S."/>
            <person name="Lin J."/>
            <person name="Yen G."/>
            <person name="Schwartz D.C."/>
            <person name="Welch R.A."/>
            <person name="Blattner F.R."/>
        </authorList>
    </citation>
    <scope>NUCLEOTIDE SEQUENCE [LARGE SCALE GENOMIC DNA]</scope>
    <source>
        <strain>O157:H7 / EDL933 / ATCC 700927 / EHEC</strain>
    </source>
</reference>
<reference key="2">
    <citation type="journal article" date="2001" name="DNA Res.">
        <title>Complete genome sequence of enterohemorrhagic Escherichia coli O157:H7 and genomic comparison with a laboratory strain K-12.</title>
        <authorList>
            <person name="Hayashi T."/>
            <person name="Makino K."/>
            <person name="Ohnishi M."/>
            <person name="Kurokawa K."/>
            <person name="Ishii K."/>
            <person name="Yokoyama K."/>
            <person name="Han C.-G."/>
            <person name="Ohtsubo E."/>
            <person name="Nakayama K."/>
            <person name="Murata T."/>
            <person name="Tanaka M."/>
            <person name="Tobe T."/>
            <person name="Iida T."/>
            <person name="Takami H."/>
            <person name="Honda T."/>
            <person name="Sasakawa C."/>
            <person name="Ogasawara N."/>
            <person name="Yasunaga T."/>
            <person name="Kuhara S."/>
            <person name="Shiba T."/>
            <person name="Hattori M."/>
            <person name="Shinagawa H."/>
        </authorList>
    </citation>
    <scope>NUCLEOTIDE SEQUENCE [LARGE SCALE GENOMIC DNA]</scope>
    <source>
        <strain>O157:H7 / Sakai / RIMD 0509952 / EHEC</strain>
    </source>
</reference>
<dbReference type="EMBL" id="AE005174">
    <property type="protein sequence ID" value="AAG58669.1"/>
    <property type="molecule type" value="Genomic_DNA"/>
</dbReference>
<dbReference type="EMBL" id="BA000007">
    <property type="protein sequence ID" value="BAB37831.1"/>
    <property type="molecule type" value="Genomic_DNA"/>
</dbReference>
<dbReference type="PIR" id="A86026">
    <property type="entry name" value="A86026"/>
</dbReference>
<dbReference type="PIR" id="H91179">
    <property type="entry name" value="H91179"/>
</dbReference>
<dbReference type="RefSeq" id="NP_312435.1">
    <property type="nucleotide sequence ID" value="NC_002695.1"/>
</dbReference>
<dbReference type="RefSeq" id="WP_000858212.1">
    <property type="nucleotide sequence ID" value="NZ_VOAI01000004.1"/>
</dbReference>
<dbReference type="SMR" id="Q8X5M2"/>
<dbReference type="STRING" id="155864.Z4942"/>
<dbReference type="GeneID" id="915733"/>
<dbReference type="KEGG" id="ece:Z4942"/>
<dbReference type="KEGG" id="ecs:ECs_4408"/>
<dbReference type="PATRIC" id="fig|386585.9.peg.4607"/>
<dbReference type="eggNOG" id="COG1301">
    <property type="taxonomic scope" value="Bacteria"/>
</dbReference>
<dbReference type="HOGENOM" id="CLU_019375_7_0_6"/>
<dbReference type="OMA" id="TWTKEID"/>
<dbReference type="Proteomes" id="UP000000558">
    <property type="component" value="Chromosome"/>
</dbReference>
<dbReference type="Proteomes" id="UP000002519">
    <property type="component" value="Chromosome"/>
</dbReference>
<dbReference type="GO" id="GO:0005886">
    <property type="term" value="C:plasma membrane"/>
    <property type="evidence" value="ECO:0007669"/>
    <property type="project" value="UniProtKB-SubCell"/>
</dbReference>
<dbReference type="GO" id="GO:0015138">
    <property type="term" value="F:fumarate transmembrane transporter activity"/>
    <property type="evidence" value="ECO:0007669"/>
    <property type="project" value="TreeGrafter"/>
</dbReference>
<dbReference type="GO" id="GO:0015366">
    <property type="term" value="F:malate:proton symporter activity"/>
    <property type="evidence" value="ECO:0007669"/>
    <property type="project" value="TreeGrafter"/>
</dbReference>
<dbReference type="GO" id="GO:0015141">
    <property type="term" value="F:succinate transmembrane transporter activity"/>
    <property type="evidence" value="ECO:0007669"/>
    <property type="project" value="TreeGrafter"/>
</dbReference>
<dbReference type="GO" id="GO:0070778">
    <property type="term" value="P:L-aspartate transmembrane transport"/>
    <property type="evidence" value="ECO:0007669"/>
    <property type="project" value="TreeGrafter"/>
</dbReference>
<dbReference type="FunFam" id="1.10.3860.10:FF:000001">
    <property type="entry name" value="C4-dicarboxylate transport protein"/>
    <property type="match status" value="1"/>
</dbReference>
<dbReference type="Gene3D" id="1.10.3860.10">
    <property type="entry name" value="Sodium:dicarboxylate symporter"/>
    <property type="match status" value="1"/>
</dbReference>
<dbReference type="HAMAP" id="MF_01300">
    <property type="entry name" value="C4_dicarb_transport"/>
    <property type="match status" value="1"/>
</dbReference>
<dbReference type="InterPro" id="IPR023954">
    <property type="entry name" value="C4_dicarb_transport"/>
</dbReference>
<dbReference type="InterPro" id="IPR001991">
    <property type="entry name" value="Na-dicarboxylate_symporter"/>
</dbReference>
<dbReference type="InterPro" id="IPR018107">
    <property type="entry name" value="Na-dicarboxylate_symporter_CS"/>
</dbReference>
<dbReference type="InterPro" id="IPR036458">
    <property type="entry name" value="Na:dicarbo_symporter_sf"/>
</dbReference>
<dbReference type="NCBIfam" id="NF002461">
    <property type="entry name" value="PRK01663.1"/>
    <property type="match status" value="1"/>
</dbReference>
<dbReference type="NCBIfam" id="NF009587">
    <property type="entry name" value="PRK13027.1"/>
    <property type="match status" value="1"/>
</dbReference>
<dbReference type="PANTHER" id="PTHR42865:SF1">
    <property type="entry name" value="AEROBIC C4-DICARBOXYLATE TRANSPORT PROTEIN"/>
    <property type="match status" value="1"/>
</dbReference>
<dbReference type="PANTHER" id="PTHR42865">
    <property type="entry name" value="PROTON/GLUTAMATE-ASPARTATE SYMPORTER"/>
    <property type="match status" value="1"/>
</dbReference>
<dbReference type="Pfam" id="PF00375">
    <property type="entry name" value="SDF"/>
    <property type="match status" value="1"/>
</dbReference>
<dbReference type="PRINTS" id="PR00173">
    <property type="entry name" value="EDTRNSPORT"/>
</dbReference>
<dbReference type="SUPFAM" id="SSF118215">
    <property type="entry name" value="Proton glutamate symport protein"/>
    <property type="match status" value="1"/>
</dbReference>
<dbReference type="PROSITE" id="PS00713">
    <property type="entry name" value="NA_DICARBOXYL_SYMP_1"/>
    <property type="match status" value="1"/>
</dbReference>
<dbReference type="PROSITE" id="PS00714">
    <property type="entry name" value="NA_DICARBOXYL_SYMP_2"/>
    <property type="match status" value="1"/>
</dbReference>
<name>DCTA_ECO57</name>